<feature type="signal peptide" evidence="2">
    <location>
        <begin position="1"/>
        <end position="22"/>
    </location>
</feature>
<feature type="chain" id="PRO_0000352707" description="Beta-defensin 25">
    <location>
        <begin position="23"/>
        <end position="71"/>
    </location>
</feature>
<feature type="disulfide bond" evidence="1">
    <location>
        <begin position="27"/>
        <end position="54"/>
    </location>
</feature>
<feature type="disulfide bond" evidence="1">
    <location>
        <begin position="34"/>
        <end position="48"/>
    </location>
</feature>
<feature type="disulfide bond" evidence="1">
    <location>
        <begin position="38"/>
        <end position="55"/>
    </location>
</feature>
<proteinExistence type="inferred from homology"/>
<evidence type="ECO:0000250" key="1"/>
<evidence type="ECO:0000255" key="2"/>
<evidence type="ECO:0000305" key="3"/>
<name>DFB25_MOUSE</name>
<protein>
    <recommendedName>
        <fullName>Beta-defensin 25</fullName>
        <shortName>BD-25</shortName>
        <shortName>mBD-25</shortName>
    </recommendedName>
    <alternativeName>
        <fullName>Defensin, beta 25</fullName>
    </alternativeName>
</protein>
<sequence>MAKWILLIVALLVLSHVPPGSTEFKRCWNGQGACRTFCTRQETFMHLCPDASLCCLSYSFKPSRPSRVGDV</sequence>
<gene>
    <name type="primary">Defb25</name>
</gene>
<reference key="1">
    <citation type="journal article" date="2005" name="Physiol. Genomics">
        <title>Cross-species analysis of the mammalian beta-defensin gene family: presence of syntenic gene clusters and preferential expression in the male reproductive tract.</title>
        <authorList>
            <person name="Patil A.A."/>
            <person name="Cai Y."/>
            <person name="Sang Y."/>
            <person name="Blecha F."/>
            <person name="Zhang G."/>
        </authorList>
    </citation>
    <scope>NUCLEOTIDE SEQUENCE [MRNA]</scope>
</reference>
<reference key="2">
    <citation type="journal article" date="2009" name="PLoS Biol.">
        <title>Lineage-specific biology revealed by a finished genome assembly of the mouse.</title>
        <authorList>
            <person name="Church D.M."/>
            <person name="Goodstadt L."/>
            <person name="Hillier L.W."/>
            <person name="Zody M.C."/>
            <person name="Goldstein S."/>
            <person name="She X."/>
            <person name="Bult C.J."/>
            <person name="Agarwala R."/>
            <person name="Cherry J.L."/>
            <person name="DiCuccio M."/>
            <person name="Hlavina W."/>
            <person name="Kapustin Y."/>
            <person name="Meric P."/>
            <person name="Maglott D."/>
            <person name="Birtle Z."/>
            <person name="Marques A.C."/>
            <person name="Graves T."/>
            <person name="Zhou S."/>
            <person name="Teague B."/>
            <person name="Potamousis K."/>
            <person name="Churas C."/>
            <person name="Place M."/>
            <person name="Herschleb J."/>
            <person name="Runnheim R."/>
            <person name="Forrest D."/>
            <person name="Amos-Landgraf J."/>
            <person name="Schwartz D.C."/>
            <person name="Cheng Z."/>
            <person name="Lindblad-Toh K."/>
            <person name="Eichler E.E."/>
            <person name="Ponting C.P."/>
        </authorList>
    </citation>
    <scope>NUCLEOTIDE SEQUENCE [LARGE SCALE GENOMIC DNA]</scope>
    <source>
        <strain>C57BL/6J</strain>
    </source>
</reference>
<reference key="3">
    <citation type="journal article" date="2004" name="Genome Res.">
        <title>The status, quality, and expansion of the NIH full-length cDNA project: the Mammalian Gene Collection (MGC).</title>
        <authorList>
            <consortium name="The MGC Project Team"/>
        </authorList>
    </citation>
    <scope>NUCLEOTIDE SEQUENCE [LARGE SCALE MRNA]</scope>
    <source>
        <tissue>Brain</tissue>
    </source>
</reference>
<organism>
    <name type="scientific">Mus musculus</name>
    <name type="common">Mouse</name>
    <dbReference type="NCBI Taxonomy" id="10090"/>
    <lineage>
        <taxon>Eukaryota</taxon>
        <taxon>Metazoa</taxon>
        <taxon>Chordata</taxon>
        <taxon>Craniata</taxon>
        <taxon>Vertebrata</taxon>
        <taxon>Euteleostomi</taxon>
        <taxon>Mammalia</taxon>
        <taxon>Eutheria</taxon>
        <taxon>Euarchontoglires</taxon>
        <taxon>Glires</taxon>
        <taxon>Rodentia</taxon>
        <taxon>Myomorpha</taxon>
        <taxon>Muroidea</taxon>
        <taxon>Muridae</taxon>
        <taxon>Murinae</taxon>
        <taxon>Mus</taxon>
        <taxon>Mus</taxon>
    </lineage>
</organism>
<dbReference type="EMBL" id="DQ012036">
    <property type="protein sequence ID" value="AAY59772.1"/>
    <property type="molecule type" value="mRNA"/>
</dbReference>
<dbReference type="EMBL" id="AL845162">
    <property type="status" value="NOT_ANNOTATED_CDS"/>
    <property type="molecule type" value="Genomic_DNA"/>
</dbReference>
<dbReference type="EMBL" id="BC132662">
    <property type="protein sequence ID" value="AAI32663.1"/>
    <property type="molecule type" value="mRNA"/>
</dbReference>
<dbReference type="CCDS" id="CCDS38280.1"/>
<dbReference type="RefSeq" id="NP_001034211.1">
    <property type="nucleotide sequence ID" value="NM_001039122.2"/>
</dbReference>
<dbReference type="SMR" id="Q30KN8"/>
<dbReference type="STRING" id="10090.ENSMUSP00000096809"/>
<dbReference type="PaxDb" id="10090-ENSMUSP00000096809"/>
<dbReference type="ProteomicsDB" id="279521"/>
<dbReference type="Antibodypedia" id="62850">
    <property type="antibodies" value="35 antibodies from 5 providers"/>
</dbReference>
<dbReference type="Ensembl" id="ENSMUST00000099203.2">
    <property type="protein sequence ID" value="ENSMUSP00000096809.2"/>
    <property type="gene ID" value="ENSMUSG00000074678.2"/>
</dbReference>
<dbReference type="GeneID" id="654459"/>
<dbReference type="KEGG" id="mmu:654459"/>
<dbReference type="UCSC" id="uc008nfv.1">
    <property type="organism name" value="mouse"/>
</dbReference>
<dbReference type="AGR" id="MGI:3651158"/>
<dbReference type="CTD" id="654459"/>
<dbReference type="MGI" id="MGI:3651158">
    <property type="gene designation" value="Defb25"/>
</dbReference>
<dbReference type="VEuPathDB" id="HostDB:ENSMUSG00000074678"/>
<dbReference type="eggNOG" id="ENOG502TF15">
    <property type="taxonomic scope" value="Eukaryota"/>
</dbReference>
<dbReference type="GeneTree" id="ENSGT00530000064308"/>
<dbReference type="HOGENOM" id="CLU_181906_4_0_1"/>
<dbReference type="InParanoid" id="Q30KN8"/>
<dbReference type="OMA" id="FMHLCPD"/>
<dbReference type="OrthoDB" id="9796954at2759"/>
<dbReference type="PhylomeDB" id="Q30KN8"/>
<dbReference type="Reactome" id="R-MMU-1461957">
    <property type="pathway name" value="Beta defensins"/>
</dbReference>
<dbReference type="Reactome" id="R-MMU-1461973">
    <property type="pathway name" value="Defensins"/>
</dbReference>
<dbReference type="BioGRID-ORCS" id="654459">
    <property type="hits" value="1 hit in 76 CRISPR screens"/>
</dbReference>
<dbReference type="PRO" id="PR:Q30KN8"/>
<dbReference type="Proteomes" id="UP000000589">
    <property type="component" value="Chromosome 2"/>
</dbReference>
<dbReference type="RNAct" id="Q30KN8">
    <property type="molecule type" value="protein"/>
</dbReference>
<dbReference type="Bgee" id="ENSMUSG00000074678">
    <property type="expression patterns" value="Expressed in mesodermal cell in embryo and 36 other cell types or tissues"/>
</dbReference>
<dbReference type="GO" id="GO:0005576">
    <property type="term" value="C:extracellular region"/>
    <property type="evidence" value="ECO:0007669"/>
    <property type="project" value="UniProtKB-SubCell"/>
</dbReference>
<dbReference type="GO" id="GO:0042742">
    <property type="term" value="P:defense response to bacterium"/>
    <property type="evidence" value="ECO:0007669"/>
    <property type="project" value="UniProtKB-KW"/>
</dbReference>
<dbReference type="GO" id="GO:0045087">
    <property type="term" value="P:innate immune response"/>
    <property type="evidence" value="ECO:0007669"/>
    <property type="project" value="InterPro"/>
</dbReference>
<dbReference type="Gene3D" id="3.10.360.10">
    <property type="entry name" value="Antimicrobial Peptide, Beta-defensin 2, Chain A"/>
    <property type="match status" value="1"/>
</dbReference>
<dbReference type="InterPro" id="IPR025933">
    <property type="entry name" value="Beta_defensin_dom"/>
</dbReference>
<dbReference type="PANTHER" id="PTHR47897">
    <property type="entry name" value="BETA-DEFENSIN 124"/>
    <property type="match status" value="1"/>
</dbReference>
<dbReference type="PANTHER" id="PTHR47897:SF1">
    <property type="entry name" value="BETA-DEFENSIN 124"/>
    <property type="match status" value="1"/>
</dbReference>
<dbReference type="Pfam" id="PF13841">
    <property type="entry name" value="Defensin_beta_2"/>
    <property type="match status" value="1"/>
</dbReference>
<accession>Q30KN8</accession>
<comment type="function">
    <text evidence="1">Has antibacterial activity.</text>
</comment>
<comment type="subcellular location">
    <subcellularLocation>
        <location evidence="1">Secreted</location>
    </subcellularLocation>
</comment>
<comment type="similarity">
    <text evidence="3">Belongs to the beta-defensin family.</text>
</comment>
<keyword id="KW-0044">Antibiotic</keyword>
<keyword id="KW-0929">Antimicrobial</keyword>
<keyword id="KW-0211">Defensin</keyword>
<keyword id="KW-1015">Disulfide bond</keyword>
<keyword id="KW-1185">Reference proteome</keyword>
<keyword id="KW-0964">Secreted</keyword>
<keyword id="KW-0732">Signal</keyword>